<evidence type="ECO:0000255" key="1">
    <source>
        <dbReference type="HAMAP-Rule" id="MF_00034"/>
    </source>
</evidence>
<gene>
    <name evidence="1" type="primary">ruvC</name>
    <name type="ordered locus">Mchl_0926</name>
</gene>
<organism>
    <name type="scientific">Methylorubrum extorquens (strain CM4 / NCIMB 13688)</name>
    <name type="common">Methylobacterium extorquens</name>
    <dbReference type="NCBI Taxonomy" id="440085"/>
    <lineage>
        <taxon>Bacteria</taxon>
        <taxon>Pseudomonadati</taxon>
        <taxon>Pseudomonadota</taxon>
        <taxon>Alphaproteobacteria</taxon>
        <taxon>Hyphomicrobiales</taxon>
        <taxon>Methylobacteriaceae</taxon>
        <taxon>Methylorubrum</taxon>
    </lineage>
</organism>
<keyword id="KW-0963">Cytoplasm</keyword>
<keyword id="KW-0227">DNA damage</keyword>
<keyword id="KW-0233">DNA recombination</keyword>
<keyword id="KW-0234">DNA repair</keyword>
<keyword id="KW-0238">DNA-binding</keyword>
<keyword id="KW-0255">Endonuclease</keyword>
<keyword id="KW-0378">Hydrolase</keyword>
<keyword id="KW-0460">Magnesium</keyword>
<keyword id="KW-0479">Metal-binding</keyword>
<keyword id="KW-0540">Nuclease</keyword>
<reference key="1">
    <citation type="submission" date="2008-12" db="EMBL/GenBank/DDBJ databases">
        <title>Complete sequence of chromosome of Methylobacterium chloromethanicum CM4.</title>
        <authorList>
            <consortium name="US DOE Joint Genome Institute"/>
            <person name="Lucas S."/>
            <person name="Copeland A."/>
            <person name="Lapidus A."/>
            <person name="Glavina del Rio T."/>
            <person name="Dalin E."/>
            <person name="Tice H."/>
            <person name="Bruce D."/>
            <person name="Goodwin L."/>
            <person name="Pitluck S."/>
            <person name="Chertkov O."/>
            <person name="Brettin T."/>
            <person name="Detter J.C."/>
            <person name="Han C."/>
            <person name="Larimer F."/>
            <person name="Land M."/>
            <person name="Hauser L."/>
            <person name="Kyrpides N."/>
            <person name="Mikhailova N."/>
            <person name="Marx C."/>
            <person name="Richardson P."/>
        </authorList>
    </citation>
    <scope>NUCLEOTIDE SEQUENCE [LARGE SCALE GENOMIC DNA]</scope>
    <source>
        <strain>CM4 / NCIMB 13688</strain>
    </source>
</reference>
<proteinExistence type="inferred from homology"/>
<accession>B7L253</accession>
<name>RUVC_METC4</name>
<sequence length="189" mass="19796">MTTDVRILGIDPGLRRTGWGLITARGSKLSYLACGVVTSDGDLPLALRLRELHEGLTRIVTTYTPDEVSVEETFVNKDAQATLKLGHARAVALLVPALAGLPVAEYAANLVKKTVAGNGHAEKVQIQAMVKFLLPKAEFKLADAADALAIAITHASHRGAIALDRRHAVAAGGGPGAARIAAALARLDR</sequence>
<protein>
    <recommendedName>
        <fullName evidence="1">Crossover junction endodeoxyribonuclease RuvC</fullName>
        <ecNumber evidence="1">3.1.21.10</ecNumber>
    </recommendedName>
    <alternativeName>
        <fullName evidence="1">Holliday junction nuclease RuvC</fullName>
    </alternativeName>
    <alternativeName>
        <fullName evidence="1">Holliday junction resolvase RuvC</fullName>
    </alternativeName>
</protein>
<feature type="chain" id="PRO_1000195262" description="Crossover junction endodeoxyribonuclease RuvC">
    <location>
        <begin position="1"/>
        <end position="189"/>
    </location>
</feature>
<feature type="active site" evidence="1">
    <location>
        <position position="11"/>
    </location>
</feature>
<feature type="active site" evidence="1">
    <location>
        <position position="71"/>
    </location>
</feature>
<feature type="active site" evidence="1">
    <location>
        <position position="143"/>
    </location>
</feature>
<feature type="binding site" evidence="1">
    <location>
        <position position="11"/>
    </location>
    <ligand>
        <name>Mg(2+)</name>
        <dbReference type="ChEBI" id="CHEBI:18420"/>
        <label>1</label>
    </ligand>
</feature>
<feature type="binding site" evidence="1">
    <location>
        <position position="71"/>
    </location>
    <ligand>
        <name>Mg(2+)</name>
        <dbReference type="ChEBI" id="CHEBI:18420"/>
        <label>2</label>
    </ligand>
</feature>
<feature type="binding site" evidence="1">
    <location>
        <position position="143"/>
    </location>
    <ligand>
        <name>Mg(2+)</name>
        <dbReference type="ChEBI" id="CHEBI:18420"/>
        <label>1</label>
    </ligand>
</feature>
<dbReference type="EC" id="3.1.21.10" evidence="1"/>
<dbReference type="EMBL" id="CP001298">
    <property type="protein sequence ID" value="ACK81843.1"/>
    <property type="molecule type" value="Genomic_DNA"/>
</dbReference>
<dbReference type="RefSeq" id="WP_003599946.1">
    <property type="nucleotide sequence ID" value="NC_011757.1"/>
</dbReference>
<dbReference type="SMR" id="B7L253"/>
<dbReference type="KEGG" id="mch:Mchl_0926"/>
<dbReference type="HOGENOM" id="CLU_091257_1_0_5"/>
<dbReference type="Proteomes" id="UP000002385">
    <property type="component" value="Chromosome"/>
</dbReference>
<dbReference type="GO" id="GO:0005737">
    <property type="term" value="C:cytoplasm"/>
    <property type="evidence" value="ECO:0007669"/>
    <property type="project" value="UniProtKB-SubCell"/>
</dbReference>
<dbReference type="GO" id="GO:0048476">
    <property type="term" value="C:Holliday junction resolvase complex"/>
    <property type="evidence" value="ECO:0007669"/>
    <property type="project" value="UniProtKB-UniRule"/>
</dbReference>
<dbReference type="GO" id="GO:0008821">
    <property type="term" value="F:crossover junction DNA endonuclease activity"/>
    <property type="evidence" value="ECO:0007669"/>
    <property type="project" value="UniProtKB-UniRule"/>
</dbReference>
<dbReference type="GO" id="GO:0003677">
    <property type="term" value="F:DNA binding"/>
    <property type="evidence" value="ECO:0007669"/>
    <property type="project" value="UniProtKB-KW"/>
</dbReference>
<dbReference type="GO" id="GO:0000287">
    <property type="term" value="F:magnesium ion binding"/>
    <property type="evidence" value="ECO:0007669"/>
    <property type="project" value="UniProtKB-UniRule"/>
</dbReference>
<dbReference type="GO" id="GO:0006310">
    <property type="term" value="P:DNA recombination"/>
    <property type="evidence" value="ECO:0007669"/>
    <property type="project" value="UniProtKB-UniRule"/>
</dbReference>
<dbReference type="GO" id="GO:0006281">
    <property type="term" value="P:DNA repair"/>
    <property type="evidence" value="ECO:0007669"/>
    <property type="project" value="UniProtKB-UniRule"/>
</dbReference>
<dbReference type="CDD" id="cd16962">
    <property type="entry name" value="RuvC"/>
    <property type="match status" value="1"/>
</dbReference>
<dbReference type="FunFam" id="3.30.420.10:FF:000002">
    <property type="entry name" value="Crossover junction endodeoxyribonuclease RuvC"/>
    <property type="match status" value="1"/>
</dbReference>
<dbReference type="Gene3D" id="3.30.420.10">
    <property type="entry name" value="Ribonuclease H-like superfamily/Ribonuclease H"/>
    <property type="match status" value="1"/>
</dbReference>
<dbReference type="HAMAP" id="MF_00034">
    <property type="entry name" value="RuvC"/>
    <property type="match status" value="1"/>
</dbReference>
<dbReference type="InterPro" id="IPR012337">
    <property type="entry name" value="RNaseH-like_sf"/>
</dbReference>
<dbReference type="InterPro" id="IPR036397">
    <property type="entry name" value="RNaseH_sf"/>
</dbReference>
<dbReference type="InterPro" id="IPR020563">
    <property type="entry name" value="X-over_junc_endoDNase_Mg_BS"/>
</dbReference>
<dbReference type="InterPro" id="IPR002176">
    <property type="entry name" value="X-over_junc_endoDNase_RuvC"/>
</dbReference>
<dbReference type="NCBIfam" id="TIGR00228">
    <property type="entry name" value="ruvC"/>
    <property type="match status" value="1"/>
</dbReference>
<dbReference type="PANTHER" id="PTHR30194">
    <property type="entry name" value="CROSSOVER JUNCTION ENDODEOXYRIBONUCLEASE RUVC"/>
    <property type="match status" value="1"/>
</dbReference>
<dbReference type="PANTHER" id="PTHR30194:SF3">
    <property type="entry name" value="CROSSOVER JUNCTION ENDODEOXYRIBONUCLEASE RUVC"/>
    <property type="match status" value="1"/>
</dbReference>
<dbReference type="Pfam" id="PF02075">
    <property type="entry name" value="RuvC"/>
    <property type="match status" value="1"/>
</dbReference>
<dbReference type="PRINTS" id="PR00696">
    <property type="entry name" value="RSOLVASERUVC"/>
</dbReference>
<dbReference type="SUPFAM" id="SSF53098">
    <property type="entry name" value="Ribonuclease H-like"/>
    <property type="match status" value="1"/>
</dbReference>
<dbReference type="PROSITE" id="PS01321">
    <property type="entry name" value="RUVC"/>
    <property type="match status" value="1"/>
</dbReference>
<comment type="function">
    <text evidence="1">The RuvA-RuvB-RuvC complex processes Holliday junction (HJ) DNA during genetic recombination and DNA repair. Endonuclease that resolves HJ intermediates. Cleaves cruciform DNA by making single-stranded nicks across the HJ at symmetrical positions within the homologous arms, yielding a 5'-phosphate and a 3'-hydroxyl group; requires a central core of homology in the junction. The consensus cleavage sequence is 5'-(A/T)TT(C/G)-3'. Cleavage occurs on the 3'-side of the TT dinucleotide at the point of strand exchange. HJ branch migration catalyzed by RuvA-RuvB allows RuvC to scan DNA until it finds its consensus sequence, where it cleaves and resolves the cruciform DNA.</text>
</comment>
<comment type="catalytic activity">
    <reaction evidence="1">
        <text>Endonucleolytic cleavage at a junction such as a reciprocal single-stranded crossover between two homologous DNA duplexes (Holliday junction).</text>
        <dbReference type="EC" id="3.1.21.10"/>
    </reaction>
</comment>
<comment type="cofactor">
    <cofactor evidence="1">
        <name>Mg(2+)</name>
        <dbReference type="ChEBI" id="CHEBI:18420"/>
    </cofactor>
    <text evidence="1">Binds 2 Mg(2+) ion per subunit.</text>
</comment>
<comment type="subunit">
    <text evidence="1">Homodimer which binds Holliday junction (HJ) DNA. The HJ becomes 2-fold symmetrical on binding to RuvC with unstacked arms; it has a different conformation from HJ DNA in complex with RuvA. In the full resolvosome a probable DNA-RuvA(4)-RuvB(12)-RuvC(2) complex forms which resolves the HJ.</text>
</comment>
<comment type="subcellular location">
    <subcellularLocation>
        <location evidence="1">Cytoplasm</location>
    </subcellularLocation>
</comment>
<comment type="similarity">
    <text evidence="1">Belongs to the RuvC family.</text>
</comment>